<sequence>MAPRSLLLLFSGALALTETWAGSHSLRYFSTAVSRPGRGEPRYIAVEYVDDTQFLRFDSDAAIPRMEPREPWVEQEGPQYWERTTGYAKANAQTDRVALRNLLRRYNQSEAGSHTLQGMNGCDMGPDGRLLRGYHQHAYDGKDYISLNEDLRSWTAADTVAQITQRFYEAEEYAEEFRTYLEGECLELLRRYLENGKETLQRADPPKAHIAHHPISDHEATLRCWALGFYPAEITLTWQRDGEEQTQDTELVETRPAGDGNFQKWAAVVVPSGEEQRYTCHVQHEGLPQPLTLRWEQSPQPTIPIVGIVAGLVVLGAVVTGAVVAAVMWRKKSSDRNRGSYSQAAV</sequence>
<evidence type="ECO:0000250" key="1"/>
<evidence type="ECO:0000255" key="2"/>
<evidence type="ECO:0000255" key="3">
    <source>
        <dbReference type="PROSITE-ProRule" id="PRU00114"/>
    </source>
</evidence>
<evidence type="ECO:0000305" key="4"/>
<reference key="1">
    <citation type="journal article" date="1990" name="Immunol. Rev.">
        <title>Comparison of class I MHC alleles in humans and apes.</title>
        <authorList>
            <person name="Lawlor D.A."/>
            <person name="Warren E."/>
            <person name="Ward F.E."/>
            <person name="Parham P."/>
        </authorList>
    </citation>
    <scope>NUCLEOTIDE SEQUENCE [MRNA]</scope>
</reference>
<reference key="2">
    <citation type="journal article" date="1988" name="Nature">
        <title>HLA-A and B polymorphisms predate the divergence of humans and chimpanzees.</title>
        <authorList>
            <person name="Lawlor D.A."/>
            <person name="Ward F.E."/>
            <person name="Ennis P.D."/>
            <person name="Jackson A.P."/>
            <person name="Parham P."/>
        </authorList>
    </citation>
    <scope>NUCLEOTIDE SEQUENCE [MRNA]</scope>
</reference>
<organism>
    <name type="scientific">Pan troglodytes</name>
    <name type="common">Chimpanzee</name>
    <dbReference type="NCBI Taxonomy" id="9598"/>
    <lineage>
        <taxon>Eukaryota</taxon>
        <taxon>Metazoa</taxon>
        <taxon>Chordata</taxon>
        <taxon>Craniata</taxon>
        <taxon>Vertebrata</taxon>
        <taxon>Euteleostomi</taxon>
        <taxon>Mammalia</taxon>
        <taxon>Eutheria</taxon>
        <taxon>Euarchontoglires</taxon>
        <taxon>Primates</taxon>
        <taxon>Haplorrhini</taxon>
        <taxon>Catarrhini</taxon>
        <taxon>Hominidae</taxon>
        <taxon>Pan</taxon>
    </lineage>
</organism>
<dbReference type="EMBL" id="M30685">
    <property type="protein sequence ID" value="AAA87973.1"/>
    <property type="molecule type" value="mRNA"/>
</dbReference>
<dbReference type="PIR" id="S07114">
    <property type="entry name" value="S07114"/>
</dbReference>
<dbReference type="RefSeq" id="NP_001122670.1">
    <property type="nucleotide sequence ID" value="NM_001129198.1"/>
</dbReference>
<dbReference type="SMR" id="P16215"/>
<dbReference type="FunCoup" id="P16215">
    <property type="interactions" value="778"/>
</dbReference>
<dbReference type="STRING" id="9598.ENSPTRP00000054635"/>
<dbReference type="GeneID" id="100169977"/>
<dbReference type="KEGG" id="ptr:100169977"/>
<dbReference type="CTD" id="100169977"/>
<dbReference type="eggNOG" id="ENOG502RQEK">
    <property type="taxonomic scope" value="Eukaryota"/>
</dbReference>
<dbReference type="InParanoid" id="P16215"/>
<dbReference type="OrthoDB" id="14663at9604"/>
<dbReference type="Proteomes" id="UP000002277">
    <property type="component" value="Unplaced"/>
</dbReference>
<dbReference type="GO" id="GO:0009897">
    <property type="term" value="C:external side of plasma membrane"/>
    <property type="evidence" value="ECO:0000318"/>
    <property type="project" value="GO_Central"/>
</dbReference>
<dbReference type="GO" id="GO:0005615">
    <property type="term" value="C:extracellular space"/>
    <property type="evidence" value="ECO:0000318"/>
    <property type="project" value="GO_Central"/>
</dbReference>
<dbReference type="GO" id="GO:0042612">
    <property type="term" value="C:MHC class I protein complex"/>
    <property type="evidence" value="ECO:0007669"/>
    <property type="project" value="UniProtKB-KW"/>
</dbReference>
<dbReference type="GO" id="GO:0042605">
    <property type="term" value="F:peptide antigen binding"/>
    <property type="evidence" value="ECO:0000318"/>
    <property type="project" value="GO_Central"/>
</dbReference>
<dbReference type="GO" id="GO:0005102">
    <property type="term" value="F:signaling receptor binding"/>
    <property type="evidence" value="ECO:0000318"/>
    <property type="project" value="GO_Central"/>
</dbReference>
<dbReference type="GO" id="GO:0002486">
    <property type="term" value="P:antigen processing and presentation of endogenous peptide antigen via MHC class I via ER pathway, TAP-independent"/>
    <property type="evidence" value="ECO:0000318"/>
    <property type="project" value="GO_Central"/>
</dbReference>
<dbReference type="GO" id="GO:0002476">
    <property type="term" value="P:antigen processing and presentation of endogenous peptide antigen via MHC class Ib"/>
    <property type="evidence" value="ECO:0000318"/>
    <property type="project" value="GO_Central"/>
</dbReference>
<dbReference type="GO" id="GO:0006955">
    <property type="term" value="P:immune response"/>
    <property type="evidence" value="ECO:0000318"/>
    <property type="project" value="GO_Central"/>
</dbReference>
<dbReference type="GO" id="GO:0001916">
    <property type="term" value="P:positive regulation of T cell mediated cytotoxicity"/>
    <property type="evidence" value="ECO:0000318"/>
    <property type="project" value="GO_Central"/>
</dbReference>
<dbReference type="CDD" id="cd21023">
    <property type="entry name" value="IgC1_MHC_Ia_HLA-F"/>
    <property type="match status" value="1"/>
</dbReference>
<dbReference type="FunFam" id="2.60.40.10:FF:000014">
    <property type="entry name" value="H-2 class I histocompatibility antigen, alpha chain"/>
    <property type="match status" value="1"/>
</dbReference>
<dbReference type="FunFam" id="3.30.500.10:FF:000001">
    <property type="entry name" value="H-2 class I histocompatibility antigen, alpha chain"/>
    <property type="match status" value="1"/>
</dbReference>
<dbReference type="Gene3D" id="2.60.40.10">
    <property type="entry name" value="Immunoglobulins"/>
    <property type="match status" value="1"/>
</dbReference>
<dbReference type="Gene3D" id="3.30.500.10">
    <property type="entry name" value="MHC class I-like antigen recognition-like"/>
    <property type="match status" value="1"/>
</dbReference>
<dbReference type="InterPro" id="IPR007110">
    <property type="entry name" value="Ig-like_dom"/>
</dbReference>
<dbReference type="InterPro" id="IPR036179">
    <property type="entry name" value="Ig-like_dom_sf"/>
</dbReference>
<dbReference type="InterPro" id="IPR013783">
    <property type="entry name" value="Ig-like_fold"/>
</dbReference>
<dbReference type="InterPro" id="IPR003006">
    <property type="entry name" value="Ig/MHC_CS"/>
</dbReference>
<dbReference type="InterPro" id="IPR003597">
    <property type="entry name" value="Ig_C1-set"/>
</dbReference>
<dbReference type="InterPro" id="IPR050208">
    <property type="entry name" value="MHC_class-I_related"/>
</dbReference>
<dbReference type="InterPro" id="IPR011161">
    <property type="entry name" value="MHC_I-like_Ag-recog"/>
</dbReference>
<dbReference type="InterPro" id="IPR037055">
    <property type="entry name" value="MHC_I-like_Ag-recog_sf"/>
</dbReference>
<dbReference type="InterPro" id="IPR011162">
    <property type="entry name" value="MHC_I/II-like_Ag-recog"/>
</dbReference>
<dbReference type="InterPro" id="IPR001039">
    <property type="entry name" value="MHC_I_a_a1/a2"/>
</dbReference>
<dbReference type="PANTHER" id="PTHR16675:SF187">
    <property type="entry name" value="HLA CLASS I HISTOCOMPATIBILITY ANTIGEN, ALPHA CHAIN F"/>
    <property type="match status" value="1"/>
</dbReference>
<dbReference type="PANTHER" id="PTHR16675">
    <property type="entry name" value="MHC CLASS I-RELATED"/>
    <property type="match status" value="1"/>
</dbReference>
<dbReference type="Pfam" id="PF07654">
    <property type="entry name" value="C1-set"/>
    <property type="match status" value="1"/>
</dbReference>
<dbReference type="Pfam" id="PF00129">
    <property type="entry name" value="MHC_I"/>
    <property type="match status" value="1"/>
</dbReference>
<dbReference type="PRINTS" id="PR01638">
    <property type="entry name" value="MHCCLASSI"/>
</dbReference>
<dbReference type="SMART" id="SM00407">
    <property type="entry name" value="IGc1"/>
    <property type="match status" value="1"/>
</dbReference>
<dbReference type="SUPFAM" id="SSF48726">
    <property type="entry name" value="Immunoglobulin"/>
    <property type="match status" value="1"/>
</dbReference>
<dbReference type="SUPFAM" id="SSF54452">
    <property type="entry name" value="MHC antigen-recognition domain"/>
    <property type="match status" value="1"/>
</dbReference>
<dbReference type="PROSITE" id="PS50835">
    <property type="entry name" value="IG_LIKE"/>
    <property type="match status" value="1"/>
</dbReference>
<dbReference type="PROSITE" id="PS00290">
    <property type="entry name" value="IG_MHC"/>
    <property type="match status" value="1"/>
</dbReference>
<accession>P16215</accession>
<keyword id="KW-1015">Disulfide bond</keyword>
<keyword id="KW-0325">Glycoprotein</keyword>
<keyword id="KW-0391">Immunity</keyword>
<keyword id="KW-0472">Membrane</keyword>
<keyword id="KW-0490">MHC I</keyword>
<keyword id="KW-1185">Reference proteome</keyword>
<keyword id="KW-0732">Signal</keyword>
<keyword id="KW-0812">Transmembrane</keyword>
<keyword id="KW-1133">Transmembrane helix</keyword>
<protein>
    <recommendedName>
        <fullName>Patr class I histocompatibility antigen, CH28 alpha chain</fullName>
    </recommendedName>
    <alternativeName>
        <fullName>ChLa class I histocompatibility antigen, CH28 alpha chain</fullName>
    </alternativeName>
</protein>
<comment type="function">
    <text>Involved in the presentation of foreign antigens to the immune system.</text>
</comment>
<comment type="subunit">
    <text>Heterodimer of an alpha chain and a beta chain (beta-2-microglobulin).</text>
</comment>
<comment type="subcellular location">
    <subcellularLocation>
        <location>Membrane</location>
        <topology>Single-pass type I membrane protein</topology>
    </subcellularLocation>
</comment>
<comment type="similarity">
    <text evidence="4">Belongs to the MHC class I family.</text>
</comment>
<feature type="signal peptide" evidence="1">
    <location>
        <begin position="1"/>
        <end position="21"/>
    </location>
</feature>
<feature type="chain" id="PRO_0000018915" description="Patr class I histocompatibility antigen, CH28 alpha chain">
    <location>
        <begin position="22"/>
        <end position="346"/>
    </location>
</feature>
<feature type="topological domain" description="Extracellular" evidence="2">
    <location>
        <begin position="22"/>
        <end position="305"/>
    </location>
</feature>
<feature type="transmembrane region" description="Helical" evidence="2">
    <location>
        <begin position="306"/>
        <end position="329"/>
    </location>
</feature>
<feature type="topological domain" description="Cytoplasmic" evidence="2">
    <location>
        <begin position="330"/>
        <end position="346"/>
    </location>
</feature>
<feature type="domain" description="Ig-like C1-type">
    <location>
        <begin position="206"/>
        <end position="294"/>
    </location>
</feature>
<feature type="region of interest" description="Alpha-1">
    <location>
        <begin position="22"/>
        <end position="111"/>
    </location>
</feature>
<feature type="region of interest" description="Alpha-2">
    <location>
        <begin position="112"/>
        <end position="203"/>
    </location>
</feature>
<feature type="region of interest" description="Alpha-3">
    <location>
        <begin position="204"/>
        <end position="295"/>
    </location>
</feature>
<feature type="region of interest" description="Connecting peptide">
    <location>
        <begin position="296"/>
        <end position="305"/>
    </location>
</feature>
<feature type="glycosylation site" description="N-linked (GlcNAc...) asparagine" evidence="1">
    <location>
        <position position="107"/>
    </location>
</feature>
<feature type="disulfide bond" evidence="3">
    <location>
        <begin position="122"/>
        <end position="185"/>
    </location>
</feature>
<feature type="disulfide bond" evidence="3">
    <location>
        <begin position="224"/>
        <end position="280"/>
    </location>
</feature>
<proteinExistence type="evidence at transcript level"/>
<name>1C28_PANTR</name>